<sequence>MAGHSQFKNIMHRKGRQDAQKSKLFSKLAREITVAAKLGTPDPAMNPRLRAAVIAARAENMPKDNIERAIKKASGNDAESYDELRYEGYGPGGVAVIMEVLTDNRNRAASDIRSYFTKSGGNLGETGSVSFMFDRLGVIEYDADKASVDDMLEAAIEAGADDVVSDEGGHEIYASQDTFRDVAKALESTFGEARKVALIWKPQNTIAVDDNTGEKLLKLIDLLNEHDDVQNVYANFEVSDALIAKLGG</sequence>
<proteinExistence type="inferred from homology"/>
<name>Y2729_NITWN</name>
<keyword id="KW-0963">Cytoplasm</keyword>
<keyword id="KW-0238">DNA-binding</keyword>
<keyword id="KW-1185">Reference proteome</keyword>
<keyword id="KW-0804">Transcription</keyword>
<keyword id="KW-0805">Transcription regulation</keyword>
<comment type="subcellular location">
    <subcellularLocation>
        <location evidence="1">Cytoplasm</location>
    </subcellularLocation>
</comment>
<comment type="similarity">
    <text evidence="1">Belongs to the TACO1 family.</text>
</comment>
<feature type="chain" id="PRO_0000257089" description="Probable transcriptional regulatory protein Nwi_2729">
    <location>
        <begin position="1"/>
        <end position="248"/>
    </location>
</feature>
<feature type="region of interest" description="Disordered" evidence="2">
    <location>
        <begin position="1"/>
        <end position="21"/>
    </location>
</feature>
<accession>Q3SP09</accession>
<protein>
    <recommendedName>
        <fullName evidence="1">Probable transcriptional regulatory protein Nwi_2729</fullName>
    </recommendedName>
</protein>
<reference key="1">
    <citation type="journal article" date="2006" name="Appl. Environ. Microbiol.">
        <title>Genome sequence of the chemolithoautotrophic nitrite-oxidizing bacterium Nitrobacter winogradskyi Nb-255.</title>
        <authorList>
            <person name="Starkenburg S.R."/>
            <person name="Chain P.S.G."/>
            <person name="Sayavedra-Soto L.A."/>
            <person name="Hauser L."/>
            <person name="Land M.L."/>
            <person name="Larimer F.W."/>
            <person name="Malfatti S.A."/>
            <person name="Klotz M.G."/>
            <person name="Bottomley P.J."/>
            <person name="Arp D.J."/>
            <person name="Hickey W.J."/>
        </authorList>
    </citation>
    <scope>NUCLEOTIDE SEQUENCE [LARGE SCALE GENOMIC DNA]</scope>
    <source>
        <strain>ATCC 25391 / DSM 10237 / CIP 104748 / NCIMB 11846 / Nb-255</strain>
    </source>
</reference>
<dbReference type="EMBL" id="CP000115">
    <property type="protein sequence ID" value="ABA05982.1"/>
    <property type="molecule type" value="Genomic_DNA"/>
</dbReference>
<dbReference type="RefSeq" id="WP_011315928.1">
    <property type="nucleotide sequence ID" value="NC_007406.1"/>
</dbReference>
<dbReference type="SMR" id="Q3SP09"/>
<dbReference type="STRING" id="323098.Nwi_2729"/>
<dbReference type="KEGG" id="nwi:Nwi_2729"/>
<dbReference type="eggNOG" id="COG0217">
    <property type="taxonomic scope" value="Bacteria"/>
</dbReference>
<dbReference type="HOGENOM" id="CLU_062974_2_2_5"/>
<dbReference type="OrthoDB" id="9781053at2"/>
<dbReference type="Proteomes" id="UP000002531">
    <property type="component" value="Chromosome"/>
</dbReference>
<dbReference type="GO" id="GO:0005829">
    <property type="term" value="C:cytosol"/>
    <property type="evidence" value="ECO:0007669"/>
    <property type="project" value="TreeGrafter"/>
</dbReference>
<dbReference type="GO" id="GO:0003677">
    <property type="term" value="F:DNA binding"/>
    <property type="evidence" value="ECO:0007669"/>
    <property type="project" value="UniProtKB-UniRule"/>
</dbReference>
<dbReference type="GO" id="GO:0006355">
    <property type="term" value="P:regulation of DNA-templated transcription"/>
    <property type="evidence" value="ECO:0007669"/>
    <property type="project" value="UniProtKB-UniRule"/>
</dbReference>
<dbReference type="FunFam" id="1.10.10.200:FF:000002">
    <property type="entry name" value="Probable transcriptional regulatory protein CLM62_37755"/>
    <property type="match status" value="1"/>
</dbReference>
<dbReference type="Gene3D" id="1.10.10.200">
    <property type="match status" value="1"/>
</dbReference>
<dbReference type="Gene3D" id="3.30.70.980">
    <property type="match status" value="2"/>
</dbReference>
<dbReference type="HAMAP" id="MF_00693">
    <property type="entry name" value="Transcrip_reg_TACO1"/>
    <property type="match status" value="1"/>
</dbReference>
<dbReference type="InterPro" id="IPR017856">
    <property type="entry name" value="Integrase-like_N"/>
</dbReference>
<dbReference type="InterPro" id="IPR048300">
    <property type="entry name" value="TACO1_YebC-like_2nd/3rd_dom"/>
</dbReference>
<dbReference type="InterPro" id="IPR049083">
    <property type="entry name" value="TACO1_YebC_N"/>
</dbReference>
<dbReference type="InterPro" id="IPR002876">
    <property type="entry name" value="Transcrip_reg_TACO1-like"/>
</dbReference>
<dbReference type="InterPro" id="IPR026564">
    <property type="entry name" value="Transcrip_reg_TACO1-like_dom3"/>
</dbReference>
<dbReference type="InterPro" id="IPR029072">
    <property type="entry name" value="YebC-like"/>
</dbReference>
<dbReference type="NCBIfam" id="NF001030">
    <property type="entry name" value="PRK00110.1"/>
    <property type="match status" value="1"/>
</dbReference>
<dbReference type="NCBIfam" id="NF009044">
    <property type="entry name" value="PRK12378.1"/>
    <property type="match status" value="1"/>
</dbReference>
<dbReference type="NCBIfam" id="TIGR01033">
    <property type="entry name" value="YebC/PmpR family DNA-binding transcriptional regulator"/>
    <property type="match status" value="1"/>
</dbReference>
<dbReference type="PANTHER" id="PTHR12532:SF6">
    <property type="entry name" value="TRANSCRIPTIONAL REGULATORY PROTEIN YEBC-RELATED"/>
    <property type="match status" value="1"/>
</dbReference>
<dbReference type="PANTHER" id="PTHR12532">
    <property type="entry name" value="TRANSLATIONAL ACTIVATOR OF CYTOCHROME C OXIDASE 1"/>
    <property type="match status" value="1"/>
</dbReference>
<dbReference type="Pfam" id="PF20772">
    <property type="entry name" value="TACO1_YebC_N"/>
    <property type="match status" value="1"/>
</dbReference>
<dbReference type="Pfam" id="PF01709">
    <property type="entry name" value="Transcrip_reg"/>
    <property type="match status" value="1"/>
</dbReference>
<dbReference type="SUPFAM" id="SSF75625">
    <property type="entry name" value="YebC-like"/>
    <property type="match status" value="1"/>
</dbReference>
<gene>
    <name type="ordered locus">Nwi_2729</name>
</gene>
<organism>
    <name type="scientific">Nitrobacter winogradskyi (strain ATCC 25391 / DSM 10237 / CIP 104748 / NCIMB 11846 / Nb-255)</name>
    <dbReference type="NCBI Taxonomy" id="323098"/>
    <lineage>
        <taxon>Bacteria</taxon>
        <taxon>Pseudomonadati</taxon>
        <taxon>Pseudomonadota</taxon>
        <taxon>Alphaproteobacteria</taxon>
        <taxon>Hyphomicrobiales</taxon>
        <taxon>Nitrobacteraceae</taxon>
        <taxon>Nitrobacter</taxon>
    </lineage>
</organism>
<evidence type="ECO:0000255" key="1">
    <source>
        <dbReference type="HAMAP-Rule" id="MF_00693"/>
    </source>
</evidence>
<evidence type="ECO:0000256" key="2">
    <source>
        <dbReference type="SAM" id="MobiDB-lite"/>
    </source>
</evidence>